<feature type="signal peptide" evidence="3">
    <location>
        <begin position="1"/>
        <end position="21"/>
    </location>
</feature>
<feature type="propeptide" id="PRO_0000006905" evidence="1">
    <location>
        <begin position="22"/>
        <end position="32"/>
    </location>
</feature>
<feature type="peptide" id="PRO_0000006906" description="Beta-defensin 1">
    <location>
        <begin position="33"/>
        <end position="68"/>
    </location>
</feature>
<feature type="disulfide bond" evidence="1">
    <location>
        <begin position="37"/>
        <end position="66"/>
    </location>
</feature>
<feature type="disulfide bond" evidence="1">
    <location>
        <begin position="44"/>
        <end position="59"/>
    </location>
</feature>
<feature type="disulfide bond" evidence="1">
    <location>
        <begin position="49"/>
        <end position="67"/>
    </location>
</feature>
<dbReference type="EMBL" id="AY033754">
    <property type="protein sequence ID" value="AAK61466.1"/>
    <property type="molecule type" value="Genomic_DNA"/>
</dbReference>
<dbReference type="EMBL" id="AY033739">
    <property type="protein sequence ID" value="AAK61466.1"/>
    <property type="status" value="JOINED"/>
    <property type="molecule type" value="Genomic_DNA"/>
</dbReference>
<dbReference type="SMR" id="Q95J22"/>
<dbReference type="GO" id="GO:0005615">
    <property type="term" value="C:extracellular space"/>
    <property type="evidence" value="ECO:0007669"/>
    <property type="project" value="TreeGrafter"/>
</dbReference>
<dbReference type="GO" id="GO:0016020">
    <property type="term" value="C:membrane"/>
    <property type="evidence" value="ECO:0000250"/>
    <property type="project" value="UniProtKB"/>
</dbReference>
<dbReference type="GO" id="GO:1990742">
    <property type="term" value="C:microvesicle"/>
    <property type="evidence" value="ECO:0000250"/>
    <property type="project" value="UniProtKB"/>
</dbReference>
<dbReference type="GO" id="GO:0097225">
    <property type="term" value="C:sperm midpiece"/>
    <property type="evidence" value="ECO:0000250"/>
    <property type="project" value="UniProtKB"/>
</dbReference>
<dbReference type="GO" id="GO:0031731">
    <property type="term" value="F:CCR6 chemokine receptor binding"/>
    <property type="evidence" value="ECO:0000250"/>
    <property type="project" value="UniProtKB"/>
</dbReference>
<dbReference type="GO" id="GO:0042802">
    <property type="term" value="F:identical protein binding"/>
    <property type="evidence" value="ECO:0000250"/>
    <property type="project" value="UniProtKB"/>
</dbReference>
<dbReference type="GO" id="GO:0019722">
    <property type="term" value="P:calcium-mediated signaling"/>
    <property type="evidence" value="ECO:0000250"/>
    <property type="project" value="UniProtKB"/>
</dbReference>
<dbReference type="GO" id="GO:0050829">
    <property type="term" value="P:defense response to Gram-negative bacterium"/>
    <property type="evidence" value="ECO:0000250"/>
    <property type="project" value="UniProtKB"/>
</dbReference>
<dbReference type="GO" id="GO:0050830">
    <property type="term" value="P:defense response to Gram-positive bacterium"/>
    <property type="evidence" value="ECO:0000250"/>
    <property type="project" value="UniProtKB"/>
</dbReference>
<dbReference type="GO" id="GO:0002227">
    <property type="term" value="P:innate immune response in mucosa"/>
    <property type="evidence" value="ECO:0007669"/>
    <property type="project" value="TreeGrafter"/>
</dbReference>
<dbReference type="GO" id="GO:0060474">
    <property type="term" value="P:positive regulation of flagellated sperm motility involved in capacitation"/>
    <property type="evidence" value="ECO:0000250"/>
    <property type="project" value="UniProtKB"/>
</dbReference>
<dbReference type="FunFam" id="3.10.360.10:FF:000001">
    <property type="entry name" value="Beta-defensin 1"/>
    <property type="match status" value="1"/>
</dbReference>
<dbReference type="Gene3D" id="3.10.360.10">
    <property type="entry name" value="Antimicrobial Peptide, Beta-defensin 2, Chain A"/>
    <property type="match status" value="1"/>
</dbReference>
<dbReference type="InterPro" id="IPR001855">
    <property type="entry name" value="Defensin_beta-like"/>
</dbReference>
<dbReference type="PANTHER" id="PTHR21388:SF9">
    <property type="entry name" value="BETA-DEFENSIN 1"/>
    <property type="match status" value="1"/>
</dbReference>
<dbReference type="PANTHER" id="PTHR21388">
    <property type="entry name" value="BETA-DEFENSIN-RELATED"/>
    <property type="match status" value="1"/>
</dbReference>
<dbReference type="Pfam" id="PF00711">
    <property type="entry name" value="Defensin_beta"/>
    <property type="match status" value="1"/>
</dbReference>
<dbReference type="SUPFAM" id="SSF57392">
    <property type="entry name" value="Defensin-like"/>
    <property type="match status" value="1"/>
</dbReference>
<reference key="1">
    <citation type="journal article" date="2002" name="Immunogenetics">
        <title>Beta-defensin 1 gene variability among non-human primates.</title>
        <authorList>
            <person name="Del Pero M."/>
            <person name="Boniotto M."/>
            <person name="Zuccon D."/>
            <person name="Cervella P."/>
            <person name="Spano A."/>
            <person name="Amoroso A."/>
            <person name="Crovella S."/>
        </authorList>
    </citation>
    <scope>NUCLEOTIDE SEQUENCE [GENOMIC DNA]</scope>
</reference>
<gene>
    <name type="primary">DEFB1</name>
</gene>
<keyword id="KW-0044">Antibiotic</keyword>
<keyword id="KW-0929">Antimicrobial</keyword>
<keyword id="KW-0211">Defensin</keyword>
<keyword id="KW-1015">Disulfide bond</keyword>
<keyword id="KW-0472">Membrane</keyword>
<keyword id="KW-0964">Secreted</keyword>
<keyword id="KW-0732">Signal</keyword>
<organism>
    <name type="scientific">Hylobates moloch</name>
    <name type="common">Silvery gibbon</name>
    <dbReference type="NCBI Taxonomy" id="81572"/>
    <lineage>
        <taxon>Eukaryota</taxon>
        <taxon>Metazoa</taxon>
        <taxon>Chordata</taxon>
        <taxon>Craniata</taxon>
        <taxon>Vertebrata</taxon>
        <taxon>Euteleostomi</taxon>
        <taxon>Mammalia</taxon>
        <taxon>Eutheria</taxon>
        <taxon>Euarchontoglires</taxon>
        <taxon>Primates</taxon>
        <taxon>Haplorrhini</taxon>
        <taxon>Catarrhini</taxon>
        <taxon>Hylobatidae</taxon>
        <taxon>Hylobates</taxon>
    </lineage>
</organism>
<evidence type="ECO:0000250" key="1"/>
<evidence type="ECO:0000250" key="2">
    <source>
        <dbReference type="UniProtKB" id="P60022"/>
    </source>
</evidence>
<evidence type="ECO:0000255" key="3"/>
<evidence type="ECO:0000305" key="4"/>
<comment type="function">
    <text evidence="2">Has bactericidal activity. May act as a ligand for C-C chemokine receptor CCR6. Positively regulates the sperm motility and bactericidal activity in a CCR6-dependent manner. Binds to CCR6 and triggers Ca2+ mobilization in the sperm which is important for its motility.</text>
</comment>
<comment type="subunit">
    <text evidence="2">Monomer. Homodimer.</text>
</comment>
<comment type="subcellular location">
    <subcellularLocation>
        <location evidence="2">Secreted</location>
    </subcellularLocation>
    <subcellularLocation>
        <location evidence="2">Membrane</location>
    </subcellularLocation>
    <text evidence="2">Associates with tumor cell membrane-derived microvesicles.</text>
</comment>
<comment type="similarity">
    <text evidence="4">Belongs to the beta-defensin family.</text>
</comment>
<protein>
    <recommendedName>
        <fullName>Beta-defensin 1</fullName>
        <shortName>BD-1</shortName>
    </recommendedName>
    <alternativeName>
        <fullName>Defensin, beta 1</fullName>
    </alternativeName>
</protein>
<name>DEFB1_HYLML</name>
<accession>Q95J22</accession>
<sequence length="68" mass="7535">MRTSYLLLFTLCLLLSEMASGDNFLTGLGHRSDHYNCVRSGGQCLYSACPIYTKIQGTCYQGKAKCCK</sequence>
<proteinExistence type="inferred from homology"/>